<reference key="1">
    <citation type="journal article" date="2006" name="Proc. Natl. Acad. Sci. U.S.A.">
        <title>Comparative genomics of the lactic acid bacteria.</title>
        <authorList>
            <person name="Makarova K.S."/>
            <person name="Slesarev A."/>
            <person name="Wolf Y.I."/>
            <person name="Sorokin A."/>
            <person name="Mirkin B."/>
            <person name="Koonin E.V."/>
            <person name="Pavlov A."/>
            <person name="Pavlova N."/>
            <person name="Karamychev V."/>
            <person name="Polouchine N."/>
            <person name="Shakhova V."/>
            <person name="Grigoriev I."/>
            <person name="Lou Y."/>
            <person name="Rohksar D."/>
            <person name="Lucas S."/>
            <person name="Huang K."/>
            <person name="Goodstein D.M."/>
            <person name="Hawkins T."/>
            <person name="Plengvidhya V."/>
            <person name="Welker D."/>
            <person name="Hughes J."/>
            <person name="Goh Y."/>
            <person name="Benson A."/>
            <person name="Baldwin K."/>
            <person name="Lee J.-H."/>
            <person name="Diaz-Muniz I."/>
            <person name="Dosti B."/>
            <person name="Smeianov V."/>
            <person name="Wechter W."/>
            <person name="Barabote R."/>
            <person name="Lorca G."/>
            <person name="Altermann E."/>
            <person name="Barrangou R."/>
            <person name="Ganesan B."/>
            <person name="Xie Y."/>
            <person name="Rawsthorne H."/>
            <person name="Tamir D."/>
            <person name="Parker C."/>
            <person name="Breidt F."/>
            <person name="Broadbent J.R."/>
            <person name="Hutkins R."/>
            <person name="O'Sullivan D."/>
            <person name="Steele J."/>
            <person name="Unlu G."/>
            <person name="Saier M.H. Jr."/>
            <person name="Klaenhammer T."/>
            <person name="Richardson P."/>
            <person name="Kozyavkin S."/>
            <person name="Weimer B.C."/>
            <person name="Mills D.A."/>
        </authorList>
    </citation>
    <scope>NUCLEOTIDE SEQUENCE [LARGE SCALE GENOMIC DNA]</scope>
    <source>
        <strain>ATCC 33323 / DSM 20243 / BCRC 14619 / CIP 102991 / JCM 1131 / KCTC 3163 / NCIMB 11718 / NCTC 13722 / AM63</strain>
    </source>
</reference>
<protein>
    <recommendedName>
        <fullName evidence="1">ATP-dependent 6-phosphofructokinase</fullName>
        <shortName evidence="1">ATP-PFK</shortName>
        <shortName evidence="1">Phosphofructokinase</shortName>
        <ecNumber evidence="1">2.7.1.11</ecNumber>
    </recommendedName>
    <alternativeName>
        <fullName evidence="1">Phosphohexokinase</fullName>
    </alternativeName>
</protein>
<evidence type="ECO:0000255" key="1">
    <source>
        <dbReference type="HAMAP-Rule" id="MF_00339"/>
    </source>
</evidence>
<sequence length="319" mass="34296">MKRIGILTSGGDAPGMNAAIRAVTRTALANGIEVCGIRYGYAGLVAGDIFQMTSETVADKINRGGTFLYSARFPEFKEEEVQLKGIEQLKKHGIDALVVIGGDGSYHGALKLTRHGYNAVGLPGSIDNDIPYTDFTIGFDTACNTAMEAIDKIRDTATSHQRVFVVNVMGRDCGDIAMHVGVATGADAIVIPEEPYDIKEIAENLKQGFANGKKHGIVVLAEGVMDANKFKDELLKYGDFDARANILGHMQRGGSPTTRDRVLASEMGAYAVKLLLEGKGGLAVGIENNKLSHHDILDLFDAKHHGNYALYSLNKDLAK</sequence>
<gene>
    <name evidence="1" type="primary">pfkA</name>
    <name type="ordered locus">LGAS_0881</name>
</gene>
<organism>
    <name type="scientific">Lactobacillus gasseri (strain ATCC 33323 / DSM 20243 / BCRC 14619 / CIP 102991 / JCM 1131 / KCTC 3163 / NCIMB 11718 / NCTC 13722 / AM63)</name>
    <dbReference type="NCBI Taxonomy" id="324831"/>
    <lineage>
        <taxon>Bacteria</taxon>
        <taxon>Bacillati</taxon>
        <taxon>Bacillota</taxon>
        <taxon>Bacilli</taxon>
        <taxon>Lactobacillales</taxon>
        <taxon>Lactobacillaceae</taxon>
        <taxon>Lactobacillus</taxon>
    </lineage>
</organism>
<feature type="chain" id="PRO_1000059771" description="ATP-dependent 6-phosphofructokinase">
    <location>
        <begin position="1"/>
        <end position="319"/>
    </location>
</feature>
<feature type="active site" description="Proton acceptor" evidence="1">
    <location>
        <position position="127"/>
    </location>
</feature>
<feature type="binding site" evidence="1">
    <location>
        <position position="11"/>
    </location>
    <ligand>
        <name>ATP</name>
        <dbReference type="ChEBI" id="CHEBI:30616"/>
    </ligand>
</feature>
<feature type="binding site" evidence="1">
    <location>
        <begin position="21"/>
        <end position="25"/>
    </location>
    <ligand>
        <name>ADP</name>
        <dbReference type="ChEBI" id="CHEBI:456216"/>
        <note>allosteric activator; ligand shared between dimeric partners</note>
    </ligand>
</feature>
<feature type="binding site" evidence="1">
    <location>
        <begin position="72"/>
        <end position="73"/>
    </location>
    <ligand>
        <name>ATP</name>
        <dbReference type="ChEBI" id="CHEBI:30616"/>
    </ligand>
</feature>
<feature type="binding site" evidence="1">
    <location>
        <begin position="102"/>
        <end position="105"/>
    </location>
    <ligand>
        <name>ATP</name>
        <dbReference type="ChEBI" id="CHEBI:30616"/>
    </ligand>
</feature>
<feature type="binding site" evidence="1">
    <location>
        <position position="103"/>
    </location>
    <ligand>
        <name>Mg(2+)</name>
        <dbReference type="ChEBI" id="CHEBI:18420"/>
        <note>catalytic</note>
    </ligand>
</feature>
<feature type="binding site" description="in other chain" evidence="1">
    <location>
        <begin position="125"/>
        <end position="127"/>
    </location>
    <ligand>
        <name>substrate</name>
        <note>ligand shared between dimeric partners</note>
    </ligand>
</feature>
<feature type="binding site" description="in other chain" evidence="1">
    <location>
        <position position="154"/>
    </location>
    <ligand>
        <name>ADP</name>
        <dbReference type="ChEBI" id="CHEBI:456216"/>
        <note>allosteric activator; ligand shared between dimeric partners</note>
    </ligand>
</feature>
<feature type="binding site" evidence="1">
    <location>
        <position position="162"/>
    </location>
    <ligand>
        <name>substrate</name>
        <note>ligand shared between dimeric partners</note>
    </ligand>
</feature>
<feature type="binding site" description="in other chain" evidence="1">
    <location>
        <begin position="169"/>
        <end position="171"/>
    </location>
    <ligand>
        <name>substrate</name>
        <note>ligand shared between dimeric partners</note>
    </ligand>
</feature>
<feature type="binding site" description="in other chain" evidence="1">
    <location>
        <begin position="185"/>
        <end position="187"/>
    </location>
    <ligand>
        <name>ADP</name>
        <dbReference type="ChEBI" id="CHEBI:456216"/>
        <note>allosteric activator; ligand shared between dimeric partners</note>
    </ligand>
</feature>
<feature type="binding site" description="in other chain" evidence="1">
    <location>
        <begin position="213"/>
        <end position="215"/>
    </location>
    <ligand>
        <name>ADP</name>
        <dbReference type="ChEBI" id="CHEBI:456216"/>
        <note>allosteric activator; ligand shared between dimeric partners</note>
    </ligand>
</feature>
<feature type="binding site" description="in other chain" evidence="1">
    <location>
        <position position="222"/>
    </location>
    <ligand>
        <name>substrate</name>
        <note>ligand shared between dimeric partners</note>
    </ligand>
</feature>
<feature type="binding site" evidence="1">
    <location>
        <position position="243"/>
    </location>
    <ligand>
        <name>substrate</name>
        <note>ligand shared between dimeric partners</note>
    </ligand>
</feature>
<feature type="binding site" description="in other chain" evidence="1">
    <location>
        <begin position="249"/>
        <end position="252"/>
    </location>
    <ligand>
        <name>substrate</name>
        <note>ligand shared between dimeric partners</note>
    </ligand>
</feature>
<keyword id="KW-0021">Allosteric enzyme</keyword>
<keyword id="KW-0067">ATP-binding</keyword>
<keyword id="KW-0963">Cytoplasm</keyword>
<keyword id="KW-0324">Glycolysis</keyword>
<keyword id="KW-0418">Kinase</keyword>
<keyword id="KW-0460">Magnesium</keyword>
<keyword id="KW-0479">Metal-binding</keyword>
<keyword id="KW-0547">Nucleotide-binding</keyword>
<keyword id="KW-0808">Transferase</keyword>
<proteinExistence type="inferred from homology"/>
<name>PFKA_LACGA</name>
<dbReference type="EC" id="2.7.1.11" evidence="1"/>
<dbReference type="EMBL" id="CP000413">
    <property type="protein sequence ID" value="ABJ60270.1"/>
    <property type="molecule type" value="Genomic_DNA"/>
</dbReference>
<dbReference type="RefSeq" id="WP_003647416.1">
    <property type="nucleotide sequence ID" value="NZ_WBMG01000010.1"/>
</dbReference>
<dbReference type="SMR" id="Q043V2"/>
<dbReference type="GeneID" id="29638439"/>
<dbReference type="KEGG" id="lga:LGAS_0881"/>
<dbReference type="HOGENOM" id="CLU_020655_0_1_9"/>
<dbReference type="BioCyc" id="LGAS324831:G1G6Y-875-MONOMER"/>
<dbReference type="UniPathway" id="UPA00109">
    <property type="reaction ID" value="UER00182"/>
</dbReference>
<dbReference type="Proteomes" id="UP000000664">
    <property type="component" value="Chromosome"/>
</dbReference>
<dbReference type="GO" id="GO:0005945">
    <property type="term" value="C:6-phosphofructokinase complex"/>
    <property type="evidence" value="ECO:0007669"/>
    <property type="project" value="TreeGrafter"/>
</dbReference>
<dbReference type="GO" id="GO:0003872">
    <property type="term" value="F:6-phosphofructokinase activity"/>
    <property type="evidence" value="ECO:0007669"/>
    <property type="project" value="UniProtKB-UniRule"/>
</dbReference>
<dbReference type="GO" id="GO:0016208">
    <property type="term" value="F:AMP binding"/>
    <property type="evidence" value="ECO:0007669"/>
    <property type="project" value="TreeGrafter"/>
</dbReference>
<dbReference type="GO" id="GO:0005524">
    <property type="term" value="F:ATP binding"/>
    <property type="evidence" value="ECO:0007669"/>
    <property type="project" value="UniProtKB-KW"/>
</dbReference>
<dbReference type="GO" id="GO:0070095">
    <property type="term" value="F:fructose-6-phosphate binding"/>
    <property type="evidence" value="ECO:0007669"/>
    <property type="project" value="TreeGrafter"/>
</dbReference>
<dbReference type="GO" id="GO:0042802">
    <property type="term" value="F:identical protein binding"/>
    <property type="evidence" value="ECO:0007669"/>
    <property type="project" value="TreeGrafter"/>
</dbReference>
<dbReference type="GO" id="GO:0046872">
    <property type="term" value="F:metal ion binding"/>
    <property type="evidence" value="ECO:0007669"/>
    <property type="project" value="UniProtKB-KW"/>
</dbReference>
<dbReference type="GO" id="GO:0048029">
    <property type="term" value="F:monosaccharide binding"/>
    <property type="evidence" value="ECO:0007669"/>
    <property type="project" value="TreeGrafter"/>
</dbReference>
<dbReference type="GO" id="GO:0061621">
    <property type="term" value="P:canonical glycolysis"/>
    <property type="evidence" value="ECO:0007669"/>
    <property type="project" value="TreeGrafter"/>
</dbReference>
<dbReference type="GO" id="GO:0030388">
    <property type="term" value="P:fructose 1,6-bisphosphate metabolic process"/>
    <property type="evidence" value="ECO:0007669"/>
    <property type="project" value="TreeGrafter"/>
</dbReference>
<dbReference type="GO" id="GO:0006002">
    <property type="term" value="P:fructose 6-phosphate metabolic process"/>
    <property type="evidence" value="ECO:0007669"/>
    <property type="project" value="InterPro"/>
</dbReference>
<dbReference type="CDD" id="cd00763">
    <property type="entry name" value="Bacterial_PFK"/>
    <property type="match status" value="1"/>
</dbReference>
<dbReference type="FunFam" id="3.40.50.450:FF:000001">
    <property type="entry name" value="ATP-dependent 6-phosphofructokinase"/>
    <property type="match status" value="1"/>
</dbReference>
<dbReference type="FunFam" id="3.40.50.460:FF:000002">
    <property type="entry name" value="ATP-dependent 6-phosphofructokinase"/>
    <property type="match status" value="1"/>
</dbReference>
<dbReference type="Gene3D" id="3.40.50.450">
    <property type="match status" value="1"/>
</dbReference>
<dbReference type="Gene3D" id="3.40.50.460">
    <property type="entry name" value="Phosphofructokinase domain"/>
    <property type="match status" value="1"/>
</dbReference>
<dbReference type="HAMAP" id="MF_00339">
    <property type="entry name" value="Phosphofructokinase_I_B1"/>
    <property type="match status" value="1"/>
</dbReference>
<dbReference type="InterPro" id="IPR022953">
    <property type="entry name" value="ATP_PFK"/>
</dbReference>
<dbReference type="InterPro" id="IPR012003">
    <property type="entry name" value="ATP_PFK_prok-type"/>
</dbReference>
<dbReference type="InterPro" id="IPR012828">
    <property type="entry name" value="PFKA_ATP_prok"/>
</dbReference>
<dbReference type="InterPro" id="IPR015912">
    <property type="entry name" value="Phosphofructokinase_CS"/>
</dbReference>
<dbReference type="InterPro" id="IPR000023">
    <property type="entry name" value="Phosphofructokinase_dom"/>
</dbReference>
<dbReference type="InterPro" id="IPR035966">
    <property type="entry name" value="PKF_sf"/>
</dbReference>
<dbReference type="NCBIfam" id="TIGR02482">
    <property type="entry name" value="PFKA_ATP"/>
    <property type="match status" value="1"/>
</dbReference>
<dbReference type="NCBIfam" id="NF002872">
    <property type="entry name" value="PRK03202.1"/>
    <property type="match status" value="1"/>
</dbReference>
<dbReference type="PANTHER" id="PTHR13697:SF4">
    <property type="entry name" value="ATP-DEPENDENT 6-PHOSPHOFRUCTOKINASE"/>
    <property type="match status" value="1"/>
</dbReference>
<dbReference type="PANTHER" id="PTHR13697">
    <property type="entry name" value="PHOSPHOFRUCTOKINASE"/>
    <property type="match status" value="1"/>
</dbReference>
<dbReference type="Pfam" id="PF00365">
    <property type="entry name" value="PFK"/>
    <property type="match status" value="1"/>
</dbReference>
<dbReference type="PIRSF" id="PIRSF000532">
    <property type="entry name" value="ATP_PFK_prok"/>
    <property type="match status" value="1"/>
</dbReference>
<dbReference type="PRINTS" id="PR00476">
    <property type="entry name" value="PHFRCTKINASE"/>
</dbReference>
<dbReference type="SUPFAM" id="SSF53784">
    <property type="entry name" value="Phosphofructokinase"/>
    <property type="match status" value="1"/>
</dbReference>
<dbReference type="PROSITE" id="PS00433">
    <property type="entry name" value="PHOSPHOFRUCTOKINASE"/>
    <property type="match status" value="1"/>
</dbReference>
<comment type="function">
    <text evidence="1">Catalyzes the phosphorylation of D-fructose 6-phosphate to fructose 1,6-bisphosphate by ATP, the first committing step of glycolysis.</text>
</comment>
<comment type="catalytic activity">
    <reaction evidence="1">
        <text>beta-D-fructose 6-phosphate + ATP = beta-D-fructose 1,6-bisphosphate + ADP + H(+)</text>
        <dbReference type="Rhea" id="RHEA:16109"/>
        <dbReference type="ChEBI" id="CHEBI:15378"/>
        <dbReference type="ChEBI" id="CHEBI:30616"/>
        <dbReference type="ChEBI" id="CHEBI:32966"/>
        <dbReference type="ChEBI" id="CHEBI:57634"/>
        <dbReference type="ChEBI" id="CHEBI:456216"/>
        <dbReference type="EC" id="2.7.1.11"/>
    </reaction>
</comment>
<comment type="cofactor">
    <cofactor evidence="1">
        <name>Mg(2+)</name>
        <dbReference type="ChEBI" id="CHEBI:18420"/>
    </cofactor>
</comment>
<comment type="activity regulation">
    <text evidence="1">Allosterically activated by ADP and other diphosphonucleosides, and allosterically inhibited by phosphoenolpyruvate.</text>
</comment>
<comment type="pathway">
    <text evidence="1">Carbohydrate degradation; glycolysis; D-glyceraldehyde 3-phosphate and glycerone phosphate from D-glucose: step 3/4.</text>
</comment>
<comment type="subunit">
    <text evidence="1">Homotetramer.</text>
</comment>
<comment type="subcellular location">
    <subcellularLocation>
        <location evidence="1">Cytoplasm</location>
    </subcellularLocation>
</comment>
<comment type="similarity">
    <text evidence="1">Belongs to the phosphofructokinase type A (PFKA) family. ATP-dependent PFK group I subfamily. Prokaryotic clade 'B1' sub-subfamily.</text>
</comment>
<accession>Q043V2</accession>